<dbReference type="EMBL" id="CP000260">
    <property type="protein sequence ID" value="ABF35022.1"/>
    <property type="molecule type" value="Genomic_DNA"/>
</dbReference>
<dbReference type="SMR" id="Q1JED6"/>
<dbReference type="KEGG" id="sph:MGAS10270_Spy1957"/>
<dbReference type="HOGENOM" id="CLU_007831_2_2_9"/>
<dbReference type="Proteomes" id="UP000002436">
    <property type="component" value="Chromosome"/>
</dbReference>
<dbReference type="GO" id="GO:0005829">
    <property type="term" value="C:cytosol"/>
    <property type="evidence" value="ECO:0007669"/>
    <property type="project" value="TreeGrafter"/>
</dbReference>
<dbReference type="GO" id="GO:0050660">
    <property type="term" value="F:flavin adenine dinucleotide binding"/>
    <property type="evidence" value="ECO:0007669"/>
    <property type="project" value="UniProtKB-UniRule"/>
</dbReference>
<dbReference type="GO" id="GO:0030488">
    <property type="term" value="P:tRNA methylation"/>
    <property type="evidence" value="ECO:0007669"/>
    <property type="project" value="TreeGrafter"/>
</dbReference>
<dbReference type="GO" id="GO:0002098">
    <property type="term" value="P:tRNA wobble uridine modification"/>
    <property type="evidence" value="ECO:0007669"/>
    <property type="project" value="InterPro"/>
</dbReference>
<dbReference type="FunFam" id="1.10.10.1800:FF:000001">
    <property type="entry name" value="tRNA uridine 5-carboxymethylaminomethyl modification enzyme MnmG"/>
    <property type="match status" value="1"/>
</dbReference>
<dbReference type="FunFam" id="1.10.150.570:FF:000001">
    <property type="entry name" value="tRNA uridine 5-carboxymethylaminomethyl modification enzyme MnmG"/>
    <property type="match status" value="1"/>
</dbReference>
<dbReference type="FunFam" id="3.50.50.60:FF:000002">
    <property type="entry name" value="tRNA uridine 5-carboxymethylaminomethyl modification enzyme MnmG"/>
    <property type="match status" value="1"/>
</dbReference>
<dbReference type="FunFam" id="3.50.50.60:FF:000063">
    <property type="entry name" value="tRNA uridine 5-carboxymethylaminomethyl modification enzyme MnmG"/>
    <property type="match status" value="1"/>
</dbReference>
<dbReference type="Gene3D" id="3.50.50.60">
    <property type="entry name" value="FAD/NAD(P)-binding domain"/>
    <property type="match status" value="2"/>
</dbReference>
<dbReference type="Gene3D" id="1.10.150.570">
    <property type="entry name" value="GidA associated domain, C-terminal subdomain"/>
    <property type="match status" value="1"/>
</dbReference>
<dbReference type="Gene3D" id="1.10.10.1800">
    <property type="entry name" value="tRNA uridine 5-carboxymethylaminomethyl modification enzyme MnmG/GidA"/>
    <property type="match status" value="1"/>
</dbReference>
<dbReference type="HAMAP" id="MF_00129">
    <property type="entry name" value="MnmG_GidA"/>
    <property type="match status" value="1"/>
</dbReference>
<dbReference type="InterPro" id="IPR036188">
    <property type="entry name" value="FAD/NAD-bd_sf"/>
</dbReference>
<dbReference type="InterPro" id="IPR049312">
    <property type="entry name" value="GIDA_C_N"/>
</dbReference>
<dbReference type="InterPro" id="IPR004416">
    <property type="entry name" value="MnmG"/>
</dbReference>
<dbReference type="InterPro" id="IPR002218">
    <property type="entry name" value="MnmG-rel"/>
</dbReference>
<dbReference type="InterPro" id="IPR020595">
    <property type="entry name" value="MnmG-rel_CS"/>
</dbReference>
<dbReference type="InterPro" id="IPR026904">
    <property type="entry name" value="MnmG_C"/>
</dbReference>
<dbReference type="InterPro" id="IPR047001">
    <property type="entry name" value="MnmG_C_subdom"/>
</dbReference>
<dbReference type="InterPro" id="IPR044920">
    <property type="entry name" value="MnmG_C_subdom_sf"/>
</dbReference>
<dbReference type="InterPro" id="IPR040131">
    <property type="entry name" value="MnmG_N"/>
</dbReference>
<dbReference type="NCBIfam" id="TIGR00136">
    <property type="entry name" value="mnmG_gidA"/>
    <property type="match status" value="1"/>
</dbReference>
<dbReference type="PANTHER" id="PTHR11806">
    <property type="entry name" value="GLUCOSE INHIBITED DIVISION PROTEIN A"/>
    <property type="match status" value="1"/>
</dbReference>
<dbReference type="PANTHER" id="PTHR11806:SF0">
    <property type="entry name" value="PROTEIN MTO1 HOMOLOG, MITOCHONDRIAL"/>
    <property type="match status" value="1"/>
</dbReference>
<dbReference type="Pfam" id="PF01134">
    <property type="entry name" value="GIDA"/>
    <property type="match status" value="1"/>
</dbReference>
<dbReference type="Pfam" id="PF21680">
    <property type="entry name" value="GIDA_C_1st"/>
    <property type="match status" value="1"/>
</dbReference>
<dbReference type="Pfam" id="PF13932">
    <property type="entry name" value="SAM_GIDA_C"/>
    <property type="match status" value="1"/>
</dbReference>
<dbReference type="PRINTS" id="PR00411">
    <property type="entry name" value="PNDRDTASEI"/>
</dbReference>
<dbReference type="SMART" id="SM01228">
    <property type="entry name" value="GIDA_assoc_3"/>
    <property type="match status" value="1"/>
</dbReference>
<dbReference type="SUPFAM" id="SSF51905">
    <property type="entry name" value="FAD/NAD(P)-binding domain"/>
    <property type="match status" value="1"/>
</dbReference>
<dbReference type="PROSITE" id="PS01280">
    <property type="entry name" value="GIDA_1"/>
    <property type="match status" value="1"/>
</dbReference>
<dbReference type="PROSITE" id="PS01281">
    <property type="entry name" value="GIDA_2"/>
    <property type="match status" value="1"/>
</dbReference>
<gene>
    <name evidence="1" type="primary">mnmG</name>
    <name evidence="1" type="synonym">gidA</name>
    <name type="ordered locus">MGAS10270_Spy1957</name>
</gene>
<keyword id="KW-0963">Cytoplasm</keyword>
<keyword id="KW-0274">FAD</keyword>
<keyword id="KW-0285">Flavoprotein</keyword>
<keyword id="KW-0520">NAD</keyword>
<keyword id="KW-0819">tRNA processing</keyword>
<feature type="chain" id="PRO_1000016691" description="tRNA uridine 5-carboxymethylaminomethyl modification enzyme MnmG">
    <location>
        <begin position="1"/>
        <end position="632"/>
    </location>
</feature>
<feature type="binding site" evidence="1">
    <location>
        <begin position="15"/>
        <end position="20"/>
    </location>
    <ligand>
        <name>FAD</name>
        <dbReference type="ChEBI" id="CHEBI:57692"/>
    </ligand>
</feature>
<feature type="binding site" evidence="1">
    <location>
        <position position="127"/>
    </location>
    <ligand>
        <name>FAD</name>
        <dbReference type="ChEBI" id="CHEBI:57692"/>
    </ligand>
</feature>
<feature type="binding site" evidence="1">
    <location>
        <position position="182"/>
    </location>
    <ligand>
        <name>FAD</name>
        <dbReference type="ChEBI" id="CHEBI:57692"/>
    </ligand>
</feature>
<feature type="binding site" evidence="1">
    <location>
        <begin position="276"/>
        <end position="290"/>
    </location>
    <ligand>
        <name>NAD(+)</name>
        <dbReference type="ChEBI" id="CHEBI:57540"/>
    </ligand>
</feature>
<feature type="binding site" evidence="1">
    <location>
        <position position="373"/>
    </location>
    <ligand>
        <name>FAD</name>
        <dbReference type="ChEBI" id="CHEBI:57692"/>
    </ligand>
</feature>
<evidence type="ECO:0000255" key="1">
    <source>
        <dbReference type="HAMAP-Rule" id="MF_00129"/>
    </source>
</evidence>
<sequence>MTHEFTESYDVIVIGAGHAGVEASLATSRMGCKTLLATINLDMLAFMPCNPSIGGSAKGIVVREIDALGGEMGKNIDKTYIQMKMLNTGKGPAVRALRAQADKSLYAREMKHTVEKQANLTLRQTMIDDILVEDGRVVGVLTATGQKFAAKAVVVTTGTALRGEIILGELKYSSGPNNSLASVTLADNLKKLGLEIGRFKTGTPPRVKASSINYDQTEIQPGDDKPNHFSFMSKDADYLKDQIPCWLTYTNQTSHDIINQNLYRAPMFSGVVKGVGPRYCPSIEDKIVRFADKERHQLFLEPEGRDTEEVYVQGLSTSLPEDVQKDLIHSIKGLEKAEMMRTGYAIEYDIVLPHQLRATLETKLISGLFTAGQTNGTSGYEEAAGQGLIAGINAALKVQGKPELILKRSDAYIGVMIDDLVTKGTLEPYRLLTSRAEYRLILRHDNADMRLTEIGRDIGLVDDERWKAFEIKKNQFDNELKRLDSIKLKPIKETNDRVQDLGFKPLTDAMTAKEFMRRPEIDYATAVSFVGPAAEDLDAKIIELLETEIKYEGYIRKALDQVAKMKRMEEKRIPANIDWDAIDSIATEARQKFKKINPETIGQASRISGVNPADISILMIYLEGNGKAHRKY</sequence>
<comment type="function">
    <text evidence="1">NAD-binding protein involved in the addition of a carboxymethylaminomethyl (cmnm) group at the wobble position (U34) of certain tRNAs, forming tRNA-cmnm(5)s(2)U34.</text>
</comment>
<comment type="cofactor">
    <cofactor evidence="1">
        <name>FAD</name>
        <dbReference type="ChEBI" id="CHEBI:57692"/>
    </cofactor>
</comment>
<comment type="subunit">
    <text evidence="1">Homodimer. Heterotetramer of two MnmE and two MnmG subunits.</text>
</comment>
<comment type="subcellular location">
    <subcellularLocation>
        <location evidence="1">Cytoplasm</location>
    </subcellularLocation>
</comment>
<comment type="similarity">
    <text evidence="1">Belongs to the MnmG family.</text>
</comment>
<organism>
    <name type="scientific">Streptococcus pyogenes serotype M2 (strain MGAS10270)</name>
    <dbReference type="NCBI Taxonomy" id="370552"/>
    <lineage>
        <taxon>Bacteria</taxon>
        <taxon>Bacillati</taxon>
        <taxon>Bacillota</taxon>
        <taxon>Bacilli</taxon>
        <taxon>Lactobacillales</taxon>
        <taxon>Streptococcaceae</taxon>
        <taxon>Streptococcus</taxon>
    </lineage>
</organism>
<reference key="1">
    <citation type="journal article" date="2006" name="Proc. Natl. Acad. Sci. U.S.A.">
        <title>Molecular genetic anatomy of inter- and intraserotype variation in the human bacterial pathogen group A Streptococcus.</title>
        <authorList>
            <person name="Beres S.B."/>
            <person name="Richter E.W."/>
            <person name="Nagiec M.J."/>
            <person name="Sumby P."/>
            <person name="Porcella S.F."/>
            <person name="DeLeo F.R."/>
            <person name="Musser J.M."/>
        </authorList>
    </citation>
    <scope>NUCLEOTIDE SEQUENCE [LARGE SCALE GENOMIC DNA]</scope>
    <source>
        <strain>MGAS10270</strain>
    </source>
</reference>
<name>MNMG_STRPD</name>
<protein>
    <recommendedName>
        <fullName evidence="1">tRNA uridine 5-carboxymethylaminomethyl modification enzyme MnmG</fullName>
    </recommendedName>
    <alternativeName>
        <fullName evidence="1">Glucose-inhibited division protein A</fullName>
    </alternativeName>
</protein>
<proteinExistence type="inferred from homology"/>
<accession>Q1JED6</accession>